<keyword id="KW-1185">Reference proteome</keyword>
<keyword id="KW-0687">Ribonucleoprotein</keyword>
<keyword id="KW-0689">Ribosomal protein</keyword>
<proteinExistence type="inferred from homology"/>
<feature type="chain" id="PRO_1000205598" description="Large ribosomal subunit protein bL28">
    <location>
        <begin position="1"/>
        <end position="61"/>
    </location>
</feature>
<sequence>MAKCAICEKGPHFGNAVSHSHRRSNKVWNANVKSVKVKVNGNAKKMYVCTSCLRSGLVERA</sequence>
<dbReference type="EMBL" id="CP001104">
    <property type="protein sequence ID" value="ACR71957.1"/>
    <property type="molecule type" value="Genomic_DNA"/>
</dbReference>
<dbReference type="RefSeq" id="WP_012739193.1">
    <property type="nucleotide sequence ID" value="NC_012778.1"/>
</dbReference>
<dbReference type="SMR" id="C4Z044"/>
<dbReference type="STRING" id="515620.EUBELI_00956"/>
<dbReference type="GeneID" id="41355685"/>
<dbReference type="KEGG" id="eel:EUBELI_00956"/>
<dbReference type="eggNOG" id="COG0227">
    <property type="taxonomic scope" value="Bacteria"/>
</dbReference>
<dbReference type="HOGENOM" id="CLU_064548_7_0_9"/>
<dbReference type="Proteomes" id="UP000001476">
    <property type="component" value="Chromosome"/>
</dbReference>
<dbReference type="GO" id="GO:1990904">
    <property type="term" value="C:ribonucleoprotein complex"/>
    <property type="evidence" value="ECO:0007669"/>
    <property type="project" value="UniProtKB-KW"/>
</dbReference>
<dbReference type="GO" id="GO:0005840">
    <property type="term" value="C:ribosome"/>
    <property type="evidence" value="ECO:0007669"/>
    <property type="project" value="UniProtKB-KW"/>
</dbReference>
<dbReference type="GO" id="GO:0003735">
    <property type="term" value="F:structural constituent of ribosome"/>
    <property type="evidence" value="ECO:0007669"/>
    <property type="project" value="InterPro"/>
</dbReference>
<dbReference type="GO" id="GO:0006412">
    <property type="term" value="P:translation"/>
    <property type="evidence" value="ECO:0007669"/>
    <property type="project" value="UniProtKB-UniRule"/>
</dbReference>
<dbReference type="Gene3D" id="2.30.170.40">
    <property type="entry name" value="Ribosomal protein L28/L24"/>
    <property type="match status" value="1"/>
</dbReference>
<dbReference type="HAMAP" id="MF_00373">
    <property type="entry name" value="Ribosomal_bL28"/>
    <property type="match status" value="1"/>
</dbReference>
<dbReference type="InterPro" id="IPR050096">
    <property type="entry name" value="Bacterial_rp_bL28"/>
</dbReference>
<dbReference type="InterPro" id="IPR026569">
    <property type="entry name" value="Ribosomal_bL28"/>
</dbReference>
<dbReference type="InterPro" id="IPR034704">
    <property type="entry name" value="Ribosomal_bL28/bL31-like_sf"/>
</dbReference>
<dbReference type="InterPro" id="IPR001383">
    <property type="entry name" value="Ribosomal_bL28_bact-type"/>
</dbReference>
<dbReference type="InterPro" id="IPR037147">
    <property type="entry name" value="Ribosomal_bL28_sf"/>
</dbReference>
<dbReference type="NCBIfam" id="TIGR00009">
    <property type="entry name" value="L28"/>
    <property type="match status" value="1"/>
</dbReference>
<dbReference type="PANTHER" id="PTHR39080">
    <property type="entry name" value="50S RIBOSOMAL PROTEIN L28"/>
    <property type="match status" value="1"/>
</dbReference>
<dbReference type="PANTHER" id="PTHR39080:SF1">
    <property type="entry name" value="LARGE RIBOSOMAL SUBUNIT PROTEIN BL28A"/>
    <property type="match status" value="1"/>
</dbReference>
<dbReference type="Pfam" id="PF00830">
    <property type="entry name" value="Ribosomal_L28"/>
    <property type="match status" value="1"/>
</dbReference>
<dbReference type="SUPFAM" id="SSF143800">
    <property type="entry name" value="L28p-like"/>
    <property type="match status" value="1"/>
</dbReference>
<evidence type="ECO:0000255" key="1">
    <source>
        <dbReference type="HAMAP-Rule" id="MF_00373"/>
    </source>
</evidence>
<evidence type="ECO:0000305" key="2"/>
<reference key="1">
    <citation type="journal article" date="2009" name="Proc. Natl. Acad. Sci. U.S.A.">
        <title>Characterizing a model human gut microbiota composed of members of its two dominant bacterial phyla.</title>
        <authorList>
            <person name="Mahowald M.A."/>
            <person name="Rey F.E."/>
            <person name="Seedorf H."/>
            <person name="Turnbaugh P.J."/>
            <person name="Fulton R.S."/>
            <person name="Wollam A."/>
            <person name="Shah N."/>
            <person name="Wang C."/>
            <person name="Magrini V."/>
            <person name="Wilson R.K."/>
            <person name="Cantarel B.L."/>
            <person name="Coutinho P.M."/>
            <person name="Henrissat B."/>
            <person name="Crock L.W."/>
            <person name="Russell A."/>
            <person name="Verberkmoes N.C."/>
            <person name="Hettich R.L."/>
            <person name="Gordon J.I."/>
        </authorList>
    </citation>
    <scope>NUCLEOTIDE SEQUENCE [LARGE SCALE GENOMIC DNA]</scope>
    <source>
        <strain>ATCC 27750 / DSM 3376 / VPI C15-48 / C15-B4</strain>
    </source>
</reference>
<organism>
    <name type="scientific">Lachnospira eligens (strain ATCC 27750 / DSM 3376 / VPI C15-48 / C15-B4)</name>
    <name type="common">Eubacterium eligens</name>
    <dbReference type="NCBI Taxonomy" id="515620"/>
    <lineage>
        <taxon>Bacteria</taxon>
        <taxon>Bacillati</taxon>
        <taxon>Bacillota</taxon>
        <taxon>Clostridia</taxon>
        <taxon>Lachnospirales</taxon>
        <taxon>Lachnospiraceae</taxon>
        <taxon>Lachnospira</taxon>
    </lineage>
</organism>
<comment type="similarity">
    <text evidence="1">Belongs to the bacterial ribosomal protein bL28 family.</text>
</comment>
<accession>C4Z044</accession>
<name>RL28_LACE2</name>
<gene>
    <name evidence="1" type="primary">rpmB</name>
    <name type="ordered locus">EUBELI_00956</name>
</gene>
<protein>
    <recommendedName>
        <fullName evidence="1">Large ribosomal subunit protein bL28</fullName>
    </recommendedName>
    <alternativeName>
        <fullName evidence="2">50S ribosomal protein L28</fullName>
    </alternativeName>
</protein>